<feature type="chain" id="PRO_0000428636" description="Alpha-1,2-mannosyltransferase MNN22">
    <location>
        <begin position="1"/>
        <end position="589"/>
    </location>
</feature>
<feature type="topological domain" description="Cytoplasmic" evidence="2">
    <location>
        <begin position="1"/>
        <end position="16"/>
    </location>
</feature>
<feature type="transmembrane region" description="Helical" evidence="2">
    <location>
        <begin position="17"/>
        <end position="33"/>
    </location>
</feature>
<feature type="topological domain" description="Extracellular" evidence="2">
    <location>
        <begin position="34"/>
        <end position="589"/>
    </location>
</feature>
<feature type="region of interest" description="Disordered" evidence="3">
    <location>
        <begin position="50"/>
        <end position="77"/>
    </location>
</feature>
<feature type="compositionally biased region" description="Polar residues" evidence="3">
    <location>
        <begin position="54"/>
        <end position="71"/>
    </location>
</feature>
<feature type="glycosylation site" description="N-linked (GlcNAc...) asparagine" evidence="2">
    <location>
        <position position="64"/>
    </location>
</feature>
<feature type="glycosylation site" description="N-linked (GlcNAc...) asparagine" evidence="2">
    <location>
        <position position="332"/>
    </location>
</feature>
<feature type="glycosylation site" description="N-linked (GlcNAc...) asparagine" evidence="2">
    <location>
        <position position="530"/>
    </location>
</feature>
<organism>
    <name type="scientific">Candida albicans (strain SC5314 / ATCC MYA-2876)</name>
    <name type="common">Yeast</name>
    <dbReference type="NCBI Taxonomy" id="237561"/>
    <lineage>
        <taxon>Eukaryota</taxon>
        <taxon>Fungi</taxon>
        <taxon>Dikarya</taxon>
        <taxon>Ascomycota</taxon>
        <taxon>Saccharomycotina</taxon>
        <taxon>Pichiomycetes</taxon>
        <taxon>Debaryomycetaceae</taxon>
        <taxon>Candida/Lodderomyces clade</taxon>
        <taxon>Candida</taxon>
    </lineage>
</organism>
<comment type="function">
    <text evidence="7">Alpha-1,2-mannosyltransferase required for cell wall integrity. Responsible for addition of the first alpha-1,2-linked mannose to form the branches on the mannan backbone of oligosaccharides. Addition of alpha-1,2-mannose is required for stabilization of the alpha-1,6-mannose backbone and hence regulates mannan fibril length; and is important for both immune recognition and virulence.</text>
</comment>
<comment type="pathway">
    <text>Protein modification; protein glycosylation.</text>
</comment>
<comment type="subcellular location">
    <subcellularLocation>
        <location evidence="1">Golgi apparatus membrane</location>
        <topology evidence="1">Single-pass type II membrane protein</topology>
    </subcellularLocation>
</comment>
<comment type="induction">
    <text evidence="4 5 6">Expression is induced by nitric oxide (NO) and HOG1; and repressed by osmotic stress, oxidative stress, and heavy metal stress. Expression is also regulated by TSA1.</text>
</comment>
<comment type="similarity">
    <text evidence="8">Belongs to the MNN1/MNT family.</text>
</comment>
<gene>
    <name type="primary">MNN22</name>
    <name type="synonym">MNN24</name>
    <name type="ordered locus">CAALFM_C404770CA</name>
    <name type="ORF">CaO19.11284</name>
    <name type="ORF">CaO19.3803</name>
</gene>
<sequence length="589" mass="68209">MGSIFKDGRRILVRPKSLIICLCLISIIFTQLIRYQYQLIADEVQPTINEDHSSSQSLKNTKLNSTRSSSPISPPKSLNKLTSQEFWEHIFNIFEINKFDDGLKPLIKYTPKEQQLTTKIKTRDWLLSKANIFHKDIIRQYHESVLRNLPSKLPKSVYTPNTYGIVTIGGNFYSWMAYIQLLQLRKLGSNLPVEILIPSIEDYYKEAHFCDHVLPQYNAKCILVPEKLGFNVAKHWKFSSYQFKALALCLSSFQHVLILDSDNVVLSKPEKVFDSPVYRDNGMVLWPDYWERTISPEWYDIIGKPVVGNKQVRTGRFPVNIHNMLTSELEINETRFHDLEGALPDLSTESGQVMFNKKTHGKVMLMTLYYNIFGPEIYYKLFSLGALGEGDKDTFAAAALACGEKYYQVASSIRTLGYFDTTPGGGFHGMAMAQKNPQLDYQLFQKTNQNFKDLHLDWDNEAKDQFSANNKIPIFTMHCNIKKINPAAYMKDEKIANMDEKRMNVRFYSNLKFKLNDDDIYSPDNEKEKNKSEKTDNDPNEIDFELSRWQIVSEILCDQKITFQFLKDENMDEVCQFVKNTIAWLGKKT</sequence>
<dbReference type="EC" id="2.4.1.-"/>
<dbReference type="EMBL" id="CP017626">
    <property type="protein sequence ID" value="AOW29220.1"/>
    <property type="molecule type" value="Genomic_DNA"/>
</dbReference>
<dbReference type="RefSeq" id="XP_717208.1">
    <property type="nucleotide sequence ID" value="XM_712115.2"/>
</dbReference>
<dbReference type="STRING" id="237561.Q5A687"/>
<dbReference type="GlyCosmos" id="Q5A687">
    <property type="glycosylation" value="3 sites, No reported glycans"/>
</dbReference>
<dbReference type="EnsemblFungi" id="C4_04770C_A-T">
    <property type="protein sequence ID" value="C4_04770C_A-T-p1"/>
    <property type="gene ID" value="C4_04770C_A"/>
</dbReference>
<dbReference type="GeneID" id="3641117"/>
<dbReference type="KEGG" id="cal:CAALFM_C404770CA"/>
<dbReference type="CGD" id="CAL0000196006">
    <property type="gene designation" value="MNN22"/>
</dbReference>
<dbReference type="VEuPathDB" id="FungiDB:C4_04770C_A"/>
<dbReference type="eggNOG" id="ENOG502QQ16">
    <property type="taxonomic scope" value="Eukaryota"/>
</dbReference>
<dbReference type="HOGENOM" id="CLU_013298_1_2_1"/>
<dbReference type="InParanoid" id="Q5A687"/>
<dbReference type="OrthoDB" id="430354at2759"/>
<dbReference type="UniPathway" id="UPA00378"/>
<dbReference type="PHI-base" id="PHI:2887"/>
<dbReference type="PRO" id="PR:Q5A687"/>
<dbReference type="Proteomes" id="UP000000559">
    <property type="component" value="Chromosome 4"/>
</dbReference>
<dbReference type="GO" id="GO:0005794">
    <property type="term" value="C:Golgi apparatus"/>
    <property type="evidence" value="ECO:0000318"/>
    <property type="project" value="GO_Central"/>
</dbReference>
<dbReference type="GO" id="GO:0000139">
    <property type="term" value="C:Golgi membrane"/>
    <property type="evidence" value="ECO:0007669"/>
    <property type="project" value="UniProtKB-SubCell"/>
</dbReference>
<dbReference type="GO" id="GO:0000026">
    <property type="term" value="F:alpha-1,2-mannosyltransferase activity"/>
    <property type="evidence" value="ECO:0000318"/>
    <property type="project" value="GO_Central"/>
</dbReference>
<dbReference type="GO" id="GO:0046354">
    <property type="term" value="P:mannan biosynthetic process"/>
    <property type="evidence" value="ECO:0000315"/>
    <property type="project" value="CGD"/>
</dbReference>
<dbReference type="GO" id="GO:0035268">
    <property type="term" value="P:protein mannosylation"/>
    <property type="evidence" value="ECO:0000315"/>
    <property type="project" value="CGD"/>
</dbReference>
<dbReference type="InterPro" id="IPR022751">
    <property type="entry name" value="Alpha_mannosyltransferase"/>
</dbReference>
<dbReference type="InterPro" id="IPR029044">
    <property type="entry name" value="Nucleotide-diphossugar_trans"/>
</dbReference>
<dbReference type="PANTHER" id="PTHR31646">
    <property type="entry name" value="ALPHA-1,2-MANNOSYLTRANSFERASE MNN2"/>
    <property type="match status" value="1"/>
</dbReference>
<dbReference type="PANTHER" id="PTHR31646:SF1">
    <property type="entry name" value="ALPHA-1,2-MANNOSYLTRANSFERASE MNN2"/>
    <property type="match status" value="1"/>
</dbReference>
<dbReference type="Pfam" id="PF11051">
    <property type="entry name" value="Mannosyl_trans3"/>
    <property type="match status" value="1"/>
</dbReference>
<dbReference type="SUPFAM" id="SSF53448">
    <property type="entry name" value="Nucleotide-diphospho-sugar transferases"/>
    <property type="match status" value="1"/>
</dbReference>
<keyword id="KW-0325">Glycoprotein</keyword>
<keyword id="KW-0333">Golgi apparatus</keyword>
<keyword id="KW-0472">Membrane</keyword>
<keyword id="KW-1185">Reference proteome</keyword>
<keyword id="KW-0735">Signal-anchor</keyword>
<keyword id="KW-0808">Transferase</keyword>
<keyword id="KW-0812">Transmembrane</keyword>
<keyword id="KW-1133">Transmembrane helix</keyword>
<accession>Q5A687</accession>
<accession>A0A1D8PM49</accession>
<accession>Q5A6G7</accession>
<name>MNN22_CANAL</name>
<reference key="1">
    <citation type="journal article" date="2004" name="Proc. Natl. Acad. Sci. U.S.A.">
        <title>The diploid genome sequence of Candida albicans.</title>
        <authorList>
            <person name="Jones T."/>
            <person name="Federspiel N.A."/>
            <person name="Chibana H."/>
            <person name="Dungan J."/>
            <person name="Kalman S."/>
            <person name="Magee B.B."/>
            <person name="Newport G."/>
            <person name="Thorstenson Y.R."/>
            <person name="Agabian N."/>
            <person name="Magee P.T."/>
            <person name="Davis R.W."/>
            <person name="Scherer S."/>
        </authorList>
    </citation>
    <scope>NUCLEOTIDE SEQUENCE [LARGE SCALE GENOMIC DNA]</scope>
    <source>
        <strain>SC5314 / ATCC MYA-2876</strain>
    </source>
</reference>
<reference key="2">
    <citation type="journal article" date="2007" name="Genome Biol.">
        <title>Assembly of the Candida albicans genome into sixteen supercontigs aligned on the eight chromosomes.</title>
        <authorList>
            <person name="van het Hoog M."/>
            <person name="Rast T.J."/>
            <person name="Martchenko M."/>
            <person name="Grindle S."/>
            <person name="Dignard D."/>
            <person name="Hogues H."/>
            <person name="Cuomo C."/>
            <person name="Berriman M."/>
            <person name="Scherer S."/>
            <person name="Magee B.B."/>
            <person name="Whiteway M."/>
            <person name="Chibana H."/>
            <person name="Nantel A."/>
            <person name="Magee P.T."/>
        </authorList>
    </citation>
    <scope>GENOME REANNOTATION</scope>
    <source>
        <strain>SC5314 / ATCC MYA-2876</strain>
    </source>
</reference>
<reference key="3">
    <citation type="journal article" date="2013" name="Genome Biol.">
        <title>Assembly of a phased diploid Candida albicans genome facilitates allele-specific measurements and provides a simple model for repeat and indel structure.</title>
        <authorList>
            <person name="Muzzey D."/>
            <person name="Schwartz K."/>
            <person name="Weissman J.S."/>
            <person name="Sherlock G."/>
        </authorList>
    </citation>
    <scope>NUCLEOTIDE SEQUENCE [LARGE SCALE GENOMIC DNA]</scope>
    <scope>GENOME REANNOTATION</scope>
    <source>
        <strain>SC5314 / ATCC MYA-2876</strain>
    </source>
</reference>
<reference key="4">
    <citation type="journal article" date="2005" name="Mol. Biol. Cell">
        <title>Transcriptional response of Candida albicans to nitric oxide and the role of the YHB1 gene in nitrosative stress and virulence.</title>
        <authorList>
            <person name="Hromatka B.S."/>
            <person name="Noble S.M."/>
            <person name="Johnson A.D."/>
        </authorList>
    </citation>
    <scope>INDUCTION</scope>
</reference>
<reference key="5">
    <citation type="journal article" date="2005" name="Mol. Microbiol.">
        <title>The moonlighting protein Tsa1p is implicated in oxidative stress response and in cell wall biogenesis in Candida albicans.</title>
        <authorList>
            <person name="Urban C."/>
            <person name="Xiong X."/>
            <person name="Sohn K."/>
            <person name="Schroppel K."/>
            <person name="Brunner H."/>
            <person name="Rupp S."/>
        </authorList>
    </citation>
    <scope>INDUCTION</scope>
</reference>
<reference key="6">
    <citation type="journal article" date="2006" name="Mol. Biol. Cell">
        <title>Role of the Hog1 stress-activated protein kinase in the global transcriptional response to stress in the fungal pathogen Candida albicans.</title>
        <authorList>
            <person name="Enjalbert B."/>
            <person name="Smith D.A."/>
            <person name="Cornell M.J."/>
            <person name="Alam I."/>
            <person name="Nicholls S."/>
            <person name="Brown A.J.P."/>
            <person name="Quinn J."/>
        </authorList>
    </citation>
    <scope>INDUCTION</scope>
</reference>
<reference key="7">
    <citation type="journal article" date="2013" name="PLoS Pathog.">
        <title>The Mnn2 mannosyltransferase family modulates mannoprotein fibril length, immune recognition and virulence of Candida albicans.</title>
        <authorList>
            <person name="Hall R.A."/>
            <person name="Bates S."/>
            <person name="Lenardon M.D."/>
            <person name="Maccallum D.M."/>
            <person name="Wagener J."/>
            <person name="Lowman D.W."/>
            <person name="Kruppa M.D."/>
            <person name="Williams D.L."/>
            <person name="Odds F.C."/>
            <person name="Brown A.J."/>
            <person name="Gow N.A."/>
        </authorList>
    </citation>
    <scope>FUNCTION</scope>
</reference>
<evidence type="ECO:0000250" key="1"/>
<evidence type="ECO:0000255" key="2"/>
<evidence type="ECO:0000256" key="3">
    <source>
        <dbReference type="SAM" id="MobiDB-lite"/>
    </source>
</evidence>
<evidence type="ECO:0000269" key="4">
    <source>
    </source>
</evidence>
<evidence type="ECO:0000269" key="5">
    <source>
    </source>
</evidence>
<evidence type="ECO:0000269" key="6">
    <source>
    </source>
</evidence>
<evidence type="ECO:0000269" key="7">
    <source>
    </source>
</evidence>
<evidence type="ECO:0000305" key="8"/>
<proteinExistence type="evidence at transcript level"/>
<protein>
    <recommendedName>
        <fullName>Alpha-1,2-mannosyltransferase MNN22</fullName>
        <ecNumber>2.4.1.-</ecNumber>
    </recommendedName>
</protein>